<name>LEUD_FRAAA</name>
<dbReference type="EC" id="4.2.1.33" evidence="1"/>
<dbReference type="EMBL" id="CT573213">
    <property type="protein sequence ID" value="CAJ64460.1"/>
    <property type="molecule type" value="Genomic_DNA"/>
</dbReference>
<dbReference type="RefSeq" id="WP_011606896.1">
    <property type="nucleotide sequence ID" value="NC_008278.1"/>
</dbReference>
<dbReference type="SMR" id="Q0RDK8"/>
<dbReference type="STRING" id="326424.FRAAL5828"/>
<dbReference type="KEGG" id="fal:FRAAL5828"/>
<dbReference type="eggNOG" id="COG0066">
    <property type="taxonomic scope" value="Bacteria"/>
</dbReference>
<dbReference type="HOGENOM" id="CLU_081378_0_1_11"/>
<dbReference type="OrthoDB" id="9777465at2"/>
<dbReference type="UniPathway" id="UPA00048">
    <property type="reaction ID" value="UER00071"/>
</dbReference>
<dbReference type="Proteomes" id="UP000000657">
    <property type="component" value="Chromosome"/>
</dbReference>
<dbReference type="GO" id="GO:0009316">
    <property type="term" value="C:3-isopropylmalate dehydratase complex"/>
    <property type="evidence" value="ECO:0007669"/>
    <property type="project" value="InterPro"/>
</dbReference>
<dbReference type="GO" id="GO:0003861">
    <property type="term" value="F:3-isopropylmalate dehydratase activity"/>
    <property type="evidence" value="ECO:0007669"/>
    <property type="project" value="UniProtKB-UniRule"/>
</dbReference>
<dbReference type="GO" id="GO:0009098">
    <property type="term" value="P:L-leucine biosynthetic process"/>
    <property type="evidence" value="ECO:0007669"/>
    <property type="project" value="UniProtKB-UniRule"/>
</dbReference>
<dbReference type="CDD" id="cd01577">
    <property type="entry name" value="IPMI_Swivel"/>
    <property type="match status" value="1"/>
</dbReference>
<dbReference type="FunFam" id="3.20.19.10:FF:000003">
    <property type="entry name" value="3-isopropylmalate dehydratase small subunit"/>
    <property type="match status" value="1"/>
</dbReference>
<dbReference type="Gene3D" id="3.20.19.10">
    <property type="entry name" value="Aconitase, domain 4"/>
    <property type="match status" value="1"/>
</dbReference>
<dbReference type="HAMAP" id="MF_01031">
    <property type="entry name" value="LeuD_type1"/>
    <property type="match status" value="1"/>
</dbReference>
<dbReference type="InterPro" id="IPR004431">
    <property type="entry name" value="3-IsopropMal_deHydase_ssu"/>
</dbReference>
<dbReference type="InterPro" id="IPR015928">
    <property type="entry name" value="Aconitase/3IPM_dehydase_swvl"/>
</dbReference>
<dbReference type="InterPro" id="IPR000573">
    <property type="entry name" value="AconitaseA/IPMdHydase_ssu_swvl"/>
</dbReference>
<dbReference type="InterPro" id="IPR033940">
    <property type="entry name" value="IPMI_Swivel"/>
</dbReference>
<dbReference type="InterPro" id="IPR050075">
    <property type="entry name" value="LeuD"/>
</dbReference>
<dbReference type="NCBIfam" id="TIGR00171">
    <property type="entry name" value="leuD"/>
    <property type="match status" value="1"/>
</dbReference>
<dbReference type="NCBIfam" id="NF002458">
    <property type="entry name" value="PRK01641.1"/>
    <property type="match status" value="1"/>
</dbReference>
<dbReference type="PANTHER" id="PTHR43345:SF5">
    <property type="entry name" value="3-ISOPROPYLMALATE DEHYDRATASE SMALL SUBUNIT"/>
    <property type="match status" value="1"/>
</dbReference>
<dbReference type="PANTHER" id="PTHR43345">
    <property type="entry name" value="3-ISOPROPYLMALATE DEHYDRATASE SMALL SUBUNIT 2-RELATED-RELATED"/>
    <property type="match status" value="1"/>
</dbReference>
<dbReference type="Pfam" id="PF00694">
    <property type="entry name" value="Aconitase_C"/>
    <property type="match status" value="1"/>
</dbReference>
<dbReference type="SUPFAM" id="SSF52016">
    <property type="entry name" value="LeuD/IlvD-like"/>
    <property type="match status" value="1"/>
</dbReference>
<organism>
    <name type="scientific">Frankia alni (strain DSM 45986 / CECT 9034 / ACN14a)</name>
    <dbReference type="NCBI Taxonomy" id="326424"/>
    <lineage>
        <taxon>Bacteria</taxon>
        <taxon>Bacillati</taxon>
        <taxon>Actinomycetota</taxon>
        <taxon>Actinomycetes</taxon>
        <taxon>Frankiales</taxon>
        <taxon>Frankiaceae</taxon>
        <taxon>Frankia</taxon>
    </lineage>
</organism>
<gene>
    <name evidence="1" type="primary">leuD</name>
    <name type="ordered locus">FRAAL5828</name>
</gene>
<protein>
    <recommendedName>
        <fullName evidence="1">3-isopropylmalate dehydratase small subunit</fullName>
        <ecNumber evidence="1">4.2.1.33</ecNumber>
    </recommendedName>
    <alternativeName>
        <fullName evidence="1">Alpha-IPM isomerase</fullName>
        <shortName evidence="1">IPMI</shortName>
    </alternativeName>
    <alternativeName>
        <fullName evidence="1">Isopropylmalate isomerase</fullName>
    </alternativeName>
</protein>
<accession>Q0RDK8</accession>
<proteinExistence type="inferred from homology"/>
<evidence type="ECO:0000255" key="1">
    <source>
        <dbReference type="HAMAP-Rule" id="MF_01031"/>
    </source>
</evidence>
<sequence length="195" mass="21438">MEAFTIHTGRAVPLRRSDVDTDQIIPSEWLKRIERTGFGAGLFSEWRADEGFVLNNPAYAEASILIAGPDFGTGSSREHAVWALQDYGFRAVISPRFADIFRGNALGNGLLPVQLPAETVETLQTAAEQDPSVEITVDLAAREVRGAGLVAPFELDDFTRWRLMEGLDDVGLTLRHEELITGFEATRPAWLPSAV</sequence>
<comment type="function">
    <text evidence="1">Catalyzes the isomerization between 2-isopropylmalate and 3-isopropylmalate, via the formation of 2-isopropylmaleate.</text>
</comment>
<comment type="catalytic activity">
    <reaction evidence="1">
        <text>(2R,3S)-3-isopropylmalate = (2S)-2-isopropylmalate</text>
        <dbReference type="Rhea" id="RHEA:32287"/>
        <dbReference type="ChEBI" id="CHEBI:1178"/>
        <dbReference type="ChEBI" id="CHEBI:35121"/>
        <dbReference type="EC" id="4.2.1.33"/>
    </reaction>
</comment>
<comment type="pathway">
    <text evidence="1">Amino-acid biosynthesis; L-leucine biosynthesis; L-leucine from 3-methyl-2-oxobutanoate: step 2/4.</text>
</comment>
<comment type="subunit">
    <text evidence="1">Heterodimer of LeuC and LeuD.</text>
</comment>
<comment type="similarity">
    <text evidence="1">Belongs to the LeuD family. LeuD type 1 subfamily.</text>
</comment>
<keyword id="KW-0028">Amino-acid biosynthesis</keyword>
<keyword id="KW-0100">Branched-chain amino acid biosynthesis</keyword>
<keyword id="KW-0432">Leucine biosynthesis</keyword>
<keyword id="KW-0456">Lyase</keyword>
<keyword id="KW-1185">Reference proteome</keyword>
<reference key="1">
    <citation type="journal article" date="2007" name="Genome Res.">
        <title>Genome characteristics of facultatively symbiotic Frankia sp. strains reflect host range and host plant biogeography.</title>
        <authorList>
            <person name="Normand P."/>
            <person name="Lapierre P."/>
            <person name="Tisa L.S."/>
            <person name="Gogarten J.P."/>
            <person name="Alloisio N."/>
            <person name="Bagnarol E."/>
            <person name="Bassi C.A."/>
            <person name="Berry A.M."/>
            <person name="Bickhart D.M."/>
            <person name="Choisne N."/>
            <person name="Couloux A."/>
            <person name="Cournoyer B."/>
            <person name="Cruveiller S."/>
            <person name="Daubin V."/>
            <person name="Demange N."/>
            <person name="Francino M.P."/>
            <person name="Goltsman E."/>
            <person name="Huang Y."/>
            <person name="Kopp O.R."/>
            <person name="Labarre L."/>
            <person name="Lapidus A."/>
            <person name="Lavire C."/>
            <person name="Marechal J."/>
            <person name="Martinez M."/>
            <person name="Mastronunzio J.E."/>
            <person name="Mullin B.C."/>
            <person name="Niemann J."/>
            <person name="Pujic P."/>
            <person name="Rawnsley T."/>
            <person name="Rouy Z."/>
            <person name="Schenowitz C."/>
            <person name="Sellstedt A."/>
            <person name="Tavares F."/>
            <person name="Tomkins J.P."/>
            <person name="Vallenet D."/>
            <person name="Valverde C."/>
            <person name="Wall L.G."/>
            <person name="Wang Y."/>
            <person name="Medigue C."/>
            <person name="Benson D.R."/>
        </authorList>
    </citation>
    <scope>NUCLEOTIDE SEQUENCE [LARGE SCALE GENOMIC DNA]</scope>
    <source>
        <strain>DSM 45986 / CECT 9034 / ACN14a</strain>
    </source>
</reference>
<feature type="chain" id="PRO_1000063763" description="3-isopropylmalate dehydratase small subunit">
    <location>
        <begin position="1"/>
        <end position="195"/>
    </location>
</feature>